<gene>
    <name evidence="1" type="primary">tig</name>
    <name type="ordered locus">LSL_0643</name>
</gene>
<evidence type="ECO:0000255" key="1">
    <source>
        <dbReference type="HAMAP-Rule" id="MF_00303"/>
    </source>
</evidence>
<feature type="chain" id="PRO_0000256569" description="Trigger factor">
    <location>
        <begin position="1"/>
        <end position="436"/>
    </location>
</feature>
<feature type="domain" description="PPIase FKBP-type" evidence="1">
    <location>
        <begin position="164"/>
        <end position="249"/>
    </location>
</feature>
<dbReference type="EC" id="5.2.1.8" evidence="1"/>
<dbReference type="EMBL" id="CP000233">
    <property type="protein sequence ID" value="ABD99453.1"/>
    <property type="molecule type" value="Genomic_DNA"/>
</dbReference>
<dbReference type="RefSeq" id="WP_003700008.1">
    <property type="nucleotide sequence ID" value="NC_007929.1"/>
</dbReference>
<dbReference type="RefSeq" id="YP_535536.1">
    <property type="nucleotide sequence ID" value="NC_007929.1"/>
</dbReference>
<dbReference type="SMR" id="Q1WU82"/>
<dbReference type="STRING" id="362948.LSL_0643"/>
<dbReference type="KEGG" id="lsl:LSL_0643"/>
<dbReference type="PATRIC" id="fig|362948.14.peg.723"/>
<dbReference type="HOGENOM" id="CLU_033058_3_2_9"/>
<dbReference type="OrthoDB" id="9767721at2"/>
<dbReference type="Proteomes" id="UP000006559">
    <property type="component" value="Chromosome"/>
</dbReference>
<dbReference type="GO" id="GO:0005737">
    <property type="term" value="C:cytoplasm"/>
    <property type="evidence" value="ECO:0007669"/>
    <property type="project" value="UniProtKB-SubCell"/>
</dbReference>
<dbReference type="GO" id="GO:0003755">
    <property type="term" value="F:peptidyl-prolyl cis-trans isomerase activity"/>
    <property type="evidence" value="ECO:0007669"/>
    <property type="project" value="UniProtKB-UniRule"/>
</dbReference>
<dbReference type="GO" id="GO:0044183">
    <property type="term" value="F:protein folding chaperone"/>
    <property type="evidence" value="ECO:0007669"/>
    <property type="project" value="TreeGrafter"/>
</dbReference>
<dbReference type="GO" id="GO:0043022">
    <property type="term" value="F:ribosome binding"/>
    <property type="evidence" value="ECO:0007669"/>
    <property type="project" value="TreeGrafter"/>
</dbReference>
<dbReference type="GO" id="GO:0051083">
    <property type="term" value="P:'de novo' cotranslational protein folding"/>
    <property type="evidence" value="ECO:0007669"/>
    <property type="project" value="TreeGrafter"/>
</dbReference>
<dbReference type="GO" id="GO:0051301">
    <property type="term" value="P:cell division"/>
    <property type="evidence" value="ECO:0007669"/>
    <property type="project" value="UniProtKB-KW"/>
</dbReference>
<dbReference type="GO" id="GO:0061077">
    <property type="term" value="P:chaperone-mediated protein folding"/>
    <property type="evidence" value="ECO:0007669"/>
    <property type="project" value="TreeGrafter"/>
</dbReference>
<dbReference type="GO" id="GO:0015031">
    <property type="term" value="P:protein transport"/>
    <property type="evidence" value="ECO:0007669"/>
    <property type="project" value="UniProtKB-UniRule"/>
</dbReference>
<dbReference type="GO" id="GO:0043335">
    <property type="term" value="P:protein unfolding"/>
    <property type="evidence" value="ECO:0007669"/>
    <property type="project" value="TreeGrafter"/>
</dbReference>
<dbReference type="FunFam" id="3.10.50.40:FF:000001">
    <property type="entry name" value="Trigger factor"/>
    <property type="match status" value="1"/>
</dbReference>
<dbReference type="Gene3D" id="3.10.50.40">
    <property type="match status" value="1"/>
</dbReference>
<dbReference type="Gene3D" id="3.30.70.1050">
    <property type="entry name" value="Trigger factor ribosome-binding domain"/>
    <property type="match status" value="1"/>
</dbReference>
<dbReference type="Gene3D" id="1.10.3120.10">
    <property type="entry name" value="Trigger factor, C-terminal domain"/>
    <property type="match status" value="1"/>
</dbReference>
<dbReference type="HAMAP" id="MF_00303">
    <property type="entry name" value="Trigger_factor_Tig"/>
    <property type="match status" value="1"/>
</dbReference>
<dbReference type="InterPro" id="IPR046357">
    <property type="entry name" value="PPIase_dom_sf"/>
</dbReference>
<dbReference type="InterPro" id="IPR001179">
    <property type="entry name" value="PPIase_FKBP_dom"/>
</dbReference>
<dbReference type="InterPro" id="IPR005215">
    <property type="entry name" value="Trig_fac"/>
</dbReference>
<dbReference type="InterPro" id="IPR008880">
    <property type="entry name" value="Trigger_fac_C"/>
</dbReference>
<dbReference type="InterPro" id="IPR037041">
    <property type="entry name" value="Trigger_fac_C_sf"/>
</dbReference>
<dbReference type="InterPro" id="IPR008881">
    <property type="entry name" value="Trigger_fac_ribosome-bd_bac"/>
</dbReference>
<dbReference type="InterPro" id="IPR036611">
    <property type="entry name" value="Trigger_fac_ribosome-bd_sf"/>
</dbReference>
<dbReference type="InterPro" id="IPR027304">
    <property type="entry name" value="Trigger_fact/SurA_dom_sf"/>
</dbReference>
<dbReference type="NCBIfam" id="TIGR00115">
    <property type="entry name" value="tig"/>
    <property type="match status" value="1"/>
</dbReference>
<dbReference type="PANTHER" id="PTHR30560">
    <property type="entry name" value="TRIGGER FACTOR CHAPERONE AND PEPTIDYL-PROLYL CIS/TRANS ISOMERASE"/>
    <property type="match status" value="1"/>
</dbReference>
<dbReference type="PANTHER" id="PTHR30560:SF3">
    <property type="entry name" value="TRIGGER FACTOR-LIKE PROTEIN TIG, CHLOROPLASTIC"/>
    <property type="match status" value="1"/>
</dbReference>
<dbReference type="Pfam" id="PF00254">
    <property type="entry name" value="FKBP_C"/>
    <property type="match status" value="1"/>
</dbReference>
<dbReference type="Pfam" id="PF05698">
    <property type="entry name" value="Trigger_C"/>
    <property type="match status" value="1"/>
</dbReference>
<dbReference type="Pfam" id="PF05697">
    <property type="entry name" value="Trigger_N"/>
    <property type="match status" value="1"/>
</dbReference>
<dbReference type="PIRSF" id="PIRSF003095">
    <property type="entry name" value="Trigger_factor"/>
    <property type="match status" value="1"/>
</dbReference>
<dbReference type="SUPFAM" id="SSF54534">
    <property type="entry name" value="FKBP-like"/>
    <property type="match status" value="1"/>
</dbReference>
<dbReference type="SUPFAM" id="SSF109998">
    <property type="entry name" value="Triger factor/SurA peptide-binding domain-like"/>
    <property type="match status" value="1"/>
</dbReference>
<dbReference type="SUPFAM" id="SSF102735">
    <property type="entry name" value="Trigger factor ribosome-binding domain"/>
    <property type="match status" value="1"/>
</dbReference>
<dbReference type="PROSITE" id="PS50059">
    <property type="entry name" value="FKBP_PPIASE"/>
    <property type="match status" value="1"/>
</dbReference>
<name>TIG_LIGS1</name>
<proteinExistence type="inferred from homology"/>
<comment type="function">
    <text evidence="1">Involved in protein export. Acts as a chaperone by maintaining the newly synthesized protein in an open conformation. Functions as a peptidyl-prolyl cis-trans isomerase.</text>
</comment>
<comment type="catalytic activity">
    <reaction evidence="1">
        <text>[protein]-peptidylproline (omega=180) = [protein]-peptidylproline (omega=0)</text>
        <dbReference type="Rhea" id="RHEA:16237"/>
        <dbReference type="Rhea" id="RHEA-COMP:10747"/>
        <dbReference type="Rhea" id="RHEA-COMP:10748"/>
        <dbReference type="ChEBI" id="CHEBI:83833"/>
        <dbReference type="ChEBI" id="CHEBI:83834"/>
        <dbReference type="EC" id="5.2.1.8"/>
    </reaction>
</comment>
<comment type="subcellular location">
    <subcellularLocation>
        <location>Cytoplasm</location>
    </subcellularLocation>
    <text evidence="1">About half TF is bound to the ribosome near the polypeptide exit tunnel while the other half is free in the cytoplasm.</text>
</comment>
<comment type="domain">
    <text evidence="1">Consists of 3 domains; the N-terminus binds the ribosome, the middle domain has PPIase activity, while the C-terminus has intrinsic chaperone activity on its own.</text>
</comment>
<comment type="similarity">
    <text evidence="1">Belongs to the FKBP-type PPIase family. Tig subfamily.</text>
</comment>
<sequence>MSIKWEKKDGTNEGKLTFEIAPEKIKEGLNSAFNRVKKSLNVPGFRKGKVPRQIFNKMYGEEALYQEALNDLLPEAYSNAVKEADINPVDQPQIDVESMESDAAWVLTAKVTVEPEVELGQYKDLEVTKHPTRVLKADIENELNRLQQQEAELVLKEDEPAEQGDTVVIDFEGKIDGEAFDGGKGENHSLELGSGQFIPGFEDQLVGHKAGEEVAVTVTFPEDYQAKDLAGKEAVFDTKIHEVKTKELPELDDEFAKDVDEDVATLEELKAKIKDRLKDQKVAEAKAAIQEEALDIAVENATIGEIPAVMIEDDVHRQMDNFLAGMQNQGISADMYYQLTGTSADDLHKQFEEGAEKRVKTNLVLEAIVKAEKIEPSEDEINAEIKSLAEQYQMDEAAVRSALSDDMLKHDIAVRKVVDEIADSAKQTRDAKKDEE</sequence>
<keyword id="KW-0131">Cell cycle</keyword>
<keyword id="KW-0132">Cell division</keyword>
<keyword id="KW-0143">Chaperone</keyword>
<keyword id="KW-0963">Cytoplasm</keyword>
<keyword id="KW-0413">Isomerase</keyword>
<keyword id="KW-1185">Reference proteome</keyword>
<keyword id="KW-0697">Rotamase</keyword>
<accession>Q1WU82</accession>
<reference key="1">
    <citation type="journal article" date="2006" name="Proc. Natl. Acad. Sci. U.S.A.">
        <title>Multireplicon genome architecture of Lactobacillus salivarius.</title>
        <authorList>
            <person name="Claesson M.J."/>
            <person name="Li Y."/>
            <person name="Leahy S."/>
            <person name="Canchaya C."/>
            <person name="van Pijkeren J.P."/>
            <person name="Cerdeno-Tarraga A.M."/>
            <person name="Parkhill J."/>
            <person name="Flynn S."/>
            <person name="O'Sullivan G.C."/>
            <person name="Collins J.K."/>
            <person name="Higgins D."/>
            <person name="Shanahan F."/>
            <person name="Fitzgerald G.F."/>
            <person name="van Sinderen D."/>
            <person name="O'Toole P.W."/>
        </authorList>
    </citation>
    <scope>NUCLEOTIDE SEQUENCE [LARGE SCALE GENOMIC DNA]</scope>
    <source>
        <strain>UCC118</strain>
    </source>
</reference>
<protein>
    <recommendedName>
        <fullName evidence="1">Trigger factor</fullName>
        <shortName evidence="1">TF</shortName>
        <ecNumber evidence="1">5.2.1.8</ecNumber>
    </recommendedName>
    <alternativeName>
        <fullName evidence="1">PPIase</fullName>
    </alternativeName>
</protein>
<organism>
    <name type="scientific">Ligilactobacillus salivarius (strain UCC118)</name>
    <name type="common">Lactobacillus salivarius</name>
    <dbReference type="NCBI Taxonomy" id="362948"/>
    <lineage>
        <taxon>Bacteria</taxon>
        <taxon>Bacillati</taxon>
        <taxon>Bacillota</taxon>
        <taxon>Bacilli</taxon>
        <taxon>Lactobacillales</taxon>
        <taxon>Lactobacillaceae</taxon>
        <taxon>Ligilactobacillus</taxon>
    </lineage>
</organism>